<sequence length="868" mass="94768">MADVTVKQLAQVVGIPVERLLNQLQEAGLSFTDDQQTVNEEQKRILLNHLKGSSNRDISAAPERITLRRKSMSQVTVGHDMHSGKTVNIEVRKKKTFIKRSAIPEQAEVEEPVVPPVVEEPVHEEITVVSDVSAETPELKETEEHPVIEPVAELDETVKEEEKINLEENTAESQDELAHANTDVIENLVDVVEETIPVSKKEEVKPEKVSKKKHLEQTDTDISEFKKGKKKPKYHTFEHDEEEQELHRRGGRSKFKKKKGTEKSDKYREAEETLTHGFALPTAPIVREVLIPETITVAELAKRMSVKAAEVIKVMMSLGAMATINQVIDQETSVIVVEEMGHKPVIIKEDAVETGLGEAISKGTKTEGRAPVVTIMGHVDHGKTSLLDYIRRTKVAAGEAGGITQHIGAYHVSTPKGNITFLDTPGHAAFTAMRARGAQATDIVILIVAADDGVKPQTIEAIQHAKAAKVPIIVAINKMDKPDADPERVMNELSVQEVIPEAWGGDTMFVNISAKSGMGIDDLLDAILLQSEVLELKAVTDGAAKGVVIESRLDKGRGPVATVLVQSGTLHKGDILLAGFQYGRVRALVSDNGDLVDSAGPSIPVEVLGLSAIPHAGDEAVVVPDEKKAREVALFRQGRFRDVKLARRQKTTIEGIMENMTATESKVLNIVLKADVQGSLEAISDALTKLSTDEVKVEVISSGVGGITESDVHLAIASNAILIGFNVRADGTAKRLAEQESVSIHYYSVIYDIVDQIKGALTGMLAPQFKEEIIGIAEVRDVFKSPKIGAIAGCMVIEGVVKRNNPIRVLRSNVVIYEGTLESLRRFKDDVLEVRQGFECGIGVKNYNDVKPGDLIEVFETVEIKRDL</sequence>
<accession>A5IHU7</accession>
<organism>
    <name type="scientific">Legionella pneumophila (strain Corby)</name>
    <dbReference type="NCBI Taxonomy" id="400673"/>
    <lineage>
        <taxon>Bacteria</taxon>
        <taxon>Pseudomonadati</taxon>
        <taxon>Pseudomonadota</taxon>
        <taxon>Gammaproteobacteria</taxon>
        <taxon>Legionellales</taxon>
        <taxon>Legionellaceae</taxon>
        <taxon>Legionella</taxon>
    </lineage>
</organism>
<gene>
    <name evidence="2" type="primary">infB</name>
    <name type="ordered locus">LPC_3057</name>
</gene>
<feature type="chain" id="PRO_1000008264" description="Translation initiation factor IF-2">
    <location>
        <begin position="1"/>
        <end position="868"/>
    </location>
</feature>
<feature type="domain" description="tr-type G">
    <location>
        <begin position="368"/>
        <end position="537"/>
    </location>
</feature>
<feature type="region of interest" description="Disordered" evidence="3">
    <location>
        <begin position="201"/>
        <end position="269"/>
    </location>
</feature>
<feature type="region of interest" description="G1" evidence="1">
    <location>
        <begin position="377"/>
        <end position="384"/>
    </location>
</feature>
<feature type="region of interest" description="G2" evidence="1">
    <location>
        <begin position="402"/>
        <end position="406"/>
    </location>
</feature>
<feature type="region of interest" description="G3" evidence="1">
    <location>
        <begin position="423"/>
        <end position="426"/>
    </location>
</feature>
<feature type="region of interest" description="G4" evidence="1">
    <location>
        <begin position="477"/>
        <end position="480"/>
    </location>
</feature>
<feature type="region of interest" description="G5" evidence="1">
    <location>
        <begin position="513"/>
        <end position="515"/>
    </location>
</feature>
<feature type="compositionally biased region" description="Basic residues" evidence="3">
    <location>
        <begin position="249"/>
        <end position="260"/>
    </location>
</feature>
<feature type="binding site" evidence="2">
    <location>
        <begin position="377"/>
        <end position="384"/>
    </location>
    <ligand>
        <name>GTP</name>
        <dbReference type="ChEBI" id="CHEBI:37565"/>
    </ligand>
</feature>
<feature type="binding site" evidence="2">
    <location>
        <begin position="423"/>
        <end position="427"/>
    </location>
    <ligand>
        <name>GTP</name>
        <dbReference type="ChEBI" id="CHEBI:37565"/>
    </ligand>
</feature>
<feature type="binding site" evidence="2">
    <location>
        <begin position="477"/>
        <end position="480"/>
    </location>
    <ligand>
        <name>GTP</name>
        <dbReference type="ChEBI" id="CHEBI:37565"/>
    </ligand>
</feature>
<evidence type="ECO:0000250" key="1"/>
<evidence type="ECO:0000255" key="2">
    <source>
        <dbReference type="HAMAP-Rule" id="MF_00100"/>
    </source>
</evidence>
<evidence type="ECO:0000256" key="3">
    <source>
        <dbReference type="SAM" id="MobiDB-lite"/>
    </source>
</evidence>
<proteinExistence type="inferred from homology"/>
<dbReference type="EMBL" id="CP000675">
    <property type="protein sequence ID" value="ABQ56947.1"/>
    <property type="molecule type" value="Genomic_DNA"/>
</dbReference>
<dbReference type="RefSeq" id="WP_011947663.1">
    <property type="nucleotide sequence ID" value="NZ_JAPMSS010000004.1"/>
</dbReference>
<dbReference type="SMR" id="A5IHU7"/>
<dbReference type="KEGG" id="lpc:LPC_3057"/>
<dbReference type="HOGENOM" id="CLU_006301_6_1_6"/>
<dbReference type="GO" id="GO:0005829">
    <property type="term" value="C:cytosol"/>
    <property type="evidence" value="ECO:0007669"/>
    <property type="project" value="TreeGrafter"/>
</dbReference>
<dbReference type="GO" id="GO:0005525">
    <property type="term" value="F:GTP binding"/>
    <property type="evidence" value="ECO:0007669"/>
    <property type="project" value="UniProtKB-KW"/>
</dbReference>
<dbReference type="GO" id="GO:0003924">
    <property type="term" value="F:GTPase activity"/>
    <property type="evidence" value="ECO:0007669"/>
    <property type="project" value="UniProtKB-UniRule"/>
</dbReference>
<dbReference type="GO" id="GO:0097216">
    <property type="term" value="F:guanosine tetraphosphate binding"/>
    <property type="evidence" value="ECO:0007669"/>
    <property type="project" value="UniProtKB-ARBA"/>
</dbReference>
<dbReference type="GO" id="GO:0003743">
    <property type="term" value="F:translation initiation factor activity"/>
    <property type="evidence" value="ECO:0007669"/>
    <property type="project" value="UniProtKB-UniRule"/>
</dbReference>
<dbReference type="CDD" id="cd01887">
    <property type="entry name" value="IF2_eIF5B"/>
    <property type="match status" value="1"/>
</dbReference>
<dbReference type="CDD" id="cd03702">
    <property type="entry name" value="IF2_mtIF2_II"/>
    <property type="match status" value="1"/>
</dbReference>
<dbReference type="CDD" id="cd03692">
    <property type="entry name" value="mtIF2_IVc"/>
    <property type="match status" value="1"/>
</dbReference>
<dbReference type="FunFam" id="2.40.30.10:FF:000007">
    <property type="entry name" value="Translation initiation factor IF-2"/>
    <property type="match status" value="1"/>
</dbReference>
<dbReference type="FunFam" id="2.40.30.10:FF:000008">
    <property type="entry name" value="Translation initiation factor IF-2"/>
    <property type="match status" value="1"/>
</dbReference>
<dbReference type="FunFam" id="3.40.50.10050:FF:000001">
    <property type="entry name" value="Translation initiation factor IF-2"/>
    <property type="match status" value="1"/>
</dbReference>
<dbReference type="FunFam" id="3.40.50.300:FF:000019">
    <property type="entry name" value="Translation initiation factor IF-2"/>
    <property type="match status" value="1"/>
</dbReference>
<dbReference type="Gene3D" id="3.40.50.300">
    <property type="entry name" value="P-loop containing nucleotide triphosphate hydrolases"/>
    <property type="match status" value="1"/>
</dbReference>
<dbReference type="Gene3D" id="3.30.56.50">
    <property type="entry name" value="Putative DNA-binding domain, N-terminal subdomain of bacterial translation initiation factor IF2"/>
    <property type="match status" value="1"/>
</dbReference>
<dbReference type="Gene3D" id="2.40.30.10">
    <property type="entry name" value="Translation factors"/>
    <property type="match status" value="2"/>
</dbReference>
<dbReference type="Gene3D" id="3.40.50.10050">
    <property type="entry name" value="Translation initiation factor IF- 2, domain 3"/>
    <property type="match status" value="1"/>
</dbReference>
<dbReference type="HAMAP" id="MF_00100_B">
    <property type="entry name" value="IF_2_B"/>
    <property type="match status" value="1"/>
</dbReference>
<dbReference type="InterPro" id="IPR009061">
    <property type="entry name" value="DNA-bd_dom_put_sf"/>
</dbReference>
<dbReference type="InterPro" id="IPR053905">
    <property type="entry name" value="EF-G-like_DII"/>
</dbReference>
<dbReference type="InterPro" id="IPR004161">
    <property type="entry name" value="EFTu-like_2"/>
</dbReference>
<dbReference type="InterPro" id="IPR013575">
    <property type="entry name" value="IF2_assoc_dom_bac"/>
</dbReference>
<dbReference type="InterPro" id="IPR044145">
    <property type="entry name" value="IF2_II"/>
</dbReference>
<dbReference type="InterPro" id="IPR006847">
    <property type="entry name" value="IF2_N"/>
</dbReference>
<dbReference type="InterPro" id="IPR027417">
    <property type="entry name" value="P-loop_NTPase"/>
</dbReference>
<dbReference type="InterPro" id="IPR005225">
    <property type="entry name" value="Small_GTP-bd"/>
</dbReference>
<dbReference type="InterPro" id="IPR000795">
    <property type="entry name" value="T_Tr_GTP-bd_dom"/>
</dbReference>
<dbReference type="InterPro" id="IPR000178">
    <property type="entry name" value="TF_IF2_bacterial-like"/>
</dbReference>
<dbReference type="InterPro" id="IPR015760">
    <property type="entry name" value="TIF_IF2"/>
</dbReference>
<dbReference type="InterPro" id="IPR023115">
    <property type="entry name" value="TIF_IF2_dom3"/>
</dbReference>
<dbReference type="InterPro" id="IPR036925">
    <property type="entry name" value="TIF_IF2_dom3_sf"/>
</dbReference>
<dbReference type="InterPro" id="IPR009000">
    <property type="entry name" value="Transl_B-barrel_sf"/>
</dbReference>
<dbReference type="NCBIfam" id="TIGR00487">
    <property type="entry name" value="IF-2"/>
    <property type="match status" value="1"/>
</dbReference>
<dbReference type="NCBIfam" id="TIGR00231">
    <property type="entry name" value="small_GTP"/>
    <property type="match status" value="1"/>
</dbReference>
<dbReference type="PANTHER" id="PTHR43381:SF5">
    <property type="entry name" value="TR-TYPE G DOMAIN-CONTAINING PROTEIN"/>
    <property type="match status" value="1"/>
</dbReference>
<dbReference type="PANTHER" id="PTHR43381">
    <property type="entry name" value="TRANSLATION INITIATION FACTOR IF-2-RELATED"/>
    <property type="match status" value="1"/>
</dbReference>
<dbReference type="Pfam" id="PF22042">
    <property type="entry name" value="EF-G_D2"/>
    <property type="match status" value="1"/>
</dbReference>
<dbReference type="Pfam" id="PF00009">
    <property type="entry name" value="GTP_EFTU"/>
    <property type="match status" value="1"/>
</dbReference>
<dbReference type="Pfam" id="PF03144">
    <property type="entry name" value="GTP_EFTU_D2"/>
    <property type="match status" value="1"/>
</dbReference>
<dbReference type="Pfam" id="PF11987">
    <property type="entry name" value="IF-2"/>
    <property type="match status" value="1"/>
</dbReference>
<dbReference type="Pfam" id="PF08364">
    <property type="entry name" value="IF2_assoc"/>
    <property type="match status" value="1"/>
</dbReference>
<dbReference type="Pfam" id="PF04760">
    <property type="entry name" value="IF2_N"/>
    <property type="match status" value="2"/>
</dbReference>
<dbReference type="SUPFAM" id="SSF52156">
    <property type="entry name" value="Initiation factor IF2/eIF5b, domain 3"/>
    <property type="match status" value="1"/>
</dbReference>
<dbReference type="SUPFAM" id="SSF52540">
    <property type="entry name" value="P-loop containing nucleoside triphosphate hydrolases"/>
    <property type="match status" value="1"/>
</dbReference>
<dbReference type="SUPFAM" id="SSF46955">
    <property type="entry name" value="Putative DNA-binding domain"/>
    <property type="match status" value="1"/>
</dbReference>
<dbReference type="SUPFAM" id="SSF50447">
    <property type="entry name" value="Translation proteins"/>
    <property type="match status" value="2"/>
</dbReference>
<dbReference type="PROSITE" id="PS51722">
    <property type="entry name" value="G_TR_2"/>
    <property type="match status" value="1"/>
</dbReference>
<dbReference type="PROSITE" id="PS01176">
    <property type="entry name" value="IF2"/>
    <property type="match status" value="1"/>
</dbReference>
<name>IF2_LEGPC</name>
<keyword id="KW-0963">Cytoplasm</keyword>
<keyword id="KW-0342">GTP-binding</keyword>
<keyword id="KW-0396">Initiation factor</keyword>
<keyword id="KW-0547">Nucleotide-binding</keyword>
<keyword id="KW-0648">Protein biosynthesis</keyword>
<comment type="function">
    <text evidence="2">One of the essential components for the initiation of protein synthesis. Protects formylmethionyl-tRNA from spontaneous hydrolysis and promotes its binding to the 30S ribosomal subunits. Also involved in the hydrolysis of GTP during the formation of the 70S ribosomal complex.</text>
</comment>
<comment type="subcellular location">
    <subcellularLocation>
        <location evidence="2">Cytoplasm</location>
    </subcellularLocation>
</comment>
<comment type="similarity">
    <text evidence="2">Belongs to the TRAFAC class translation factor GTPase superfamily. Classic translation factor GTPase family. IF-2 subfamily.</text>
</comment>
<reference key="1">
    <citation type="submission" date="2006-11" db="EMBL/GenBank/DDBJ databases">
        <title>Identification and characterization of a new conjugation/ type IVA secretion system (trb/tra) of L. pneumophila Corby localized on a mobile genomic island.</title>
        <authorList>
            <person name="Gloeckner G."/>
            <person name="Albert-Weissenberger C."/>
            <person name="Weinmann E."/>
            <person name="Jacobi S."/>
            <person name="Schunder E."/>
            <person name="Steinert M."/>
            <person name="Buchrieser C."/>
            <person name="Hacker J."/>
            <person name="Heuner K."/>
        </authorList>
    </citation>
    <scope>NUCLEOTIDE SEQUENCE [LARGE SCALE GENOMIC DNA]</scope>
    <source>
        <strain>Corby</strain>
    </source>
</reference>
<protein>
    <recommendedName>
        <fullName evidence="2">Translation initiation factor IF-2</fullName>
    </recommendedName>
</protein>